<protein>
    <recommendedName>
        <fullName evidence="1">Histidine/lysine/arginine/ornithine transport system permease protein HisM</fullName>
    </recommendedName>
</protein>
<comment type="function">
    <text evidence="1">Part of the ABC transporter complex HisPMQJ involved in histidine transport. Is also part of the ABC transporter complex HisPMQ-ArgT involved in lysine/arginine/ornithine transport. Probably responsible for the translocation of the substrate across the membrane.</text>
</comment>
<comment type="subunit">
    <text evidence="1">The HisPMQJ complex is composed of two ATP-binding proteins (HisP), two transmembrane proteins (HisM and HisQ) and a solute-binding protein (HisJ). The HisPMQ-ArgT complex is composed of two ATP-binding proteins (HisP), two transmembrane proteins (HisM and HisQ) and a solute-binding protein (ArgT).</text>
</comment>
<comment type="subcellular location">
    <subcellularLocation>
        <location evidence="1">Cell inner membrane</location>
        <topology evidence="1">Multi-pass membrane protein</topology>
    </subcellularLocation>
</comment>
<comment type="similarity">
    <text evidence="5">Belongs to the binding-protein-dependent transport system permease family. HisMQ subfamily.</text>
</comment>
<gene>
    <name type="primary">hisM</name>
    <name type="ordered locus">Z3569</name>
    <name type="ordered locus">ECs3191</name>
</gene>
<reference key="1">
    <citation type="journal article" date="2001" name="Nature">
        <title>Genome sequence of enterohaemorrhagic Escherichia coli O157:H7.</title>
        <authorList>
            <person name="Perna N.T."/>
            <person name="Plunkett G. III"/>
            <person name="Burland V."/>
            <person name="Mau B."/>
            <person name="Glasner J.D."/>
            <person name="Rose D.J."/>
            <person name="Mayhew G.F."/>
            <person name="Evans P.S."/>
            <person name="Gregor J."/>
            <person name="Kirkpatrick H.A."/>
            <person name="Posfai G."/>
            <person name="Hackett J."/>
            <person name="Klink S."/>
            <person name="Boutin A."/>
            <person name="Shao Y."/>
            <person name="Miller L."/>
            <person name="Grotbeck E.J."/>
            <person name="Davis N.W."/>
            <person name="Lim A."/>
            <person name="Dimalanta E.T."/>
            <person name="Potamousis K."/>
            <person name="Apodaca J."/>
            <person name="Anantharaman T.S."/>
            <person name="Lin J."/>
            <person name="Yen G."/>
            <person name="Schwartz D.C."/>
            <person name="Welch R.A."/>
            <person name="Blattner F.R."/>
        </authorList>
    </citation>
    <scope>NUCLEOTIDE SEQUENCE [LARGE SCALE GENOMIC DNA]</scope>
    <source>
        <strain>O157:H7 / EDL933 / ATCC 700927 / EHEC</strain>
    </source>
</reference>
<reference key="2">
    <citation type="journal article" date="2001" name="DNA Res.">
        <title>Complete genome sequence of enterohemorrhagic Escherichia coli O157:H7 and genomic comparison with a laboratory strain K-12.</title>
        <authorList>
            <person name="Hayashi T."/>
            <person name="Makino K."/>
            <person name="Ohnishi M."/>
            <person name="Kurokawa K."/>
            <person name="Ishii K."/>
            <person name="Yokoyama K."/>
            <person name="Han C.-G."/>
            <person name="Ohtsubo E."/>
            <person name="Nakayama K."/>
            <person name="Murata T."/>
            <person name="Tanaka M."/>
            <person name="Tobe T."/>
            <person name="Iida T."/>
            <person name="Takami H."/>
            <person name="Honda T."/>
            <person name="Sasakawa C."/>
            <person name="Ogasawara N."/>
            <person name="Yasunaga T."/>
            <person name="Kuhara S."/>
            <person name="Shiba T."/>
            <person name="Hattori M."/>
            <person name="Shinagawa H."/>
        </authorList>
    </citation>
    <scope>NUCLEOTIDE SEQUENCE [LARGE SCALE GENOMIC DNA]</scope>
    <source>
        <strain>O157:H7 / Sakai / RIMD 0509952 / EHEC</strain>
    </source>
</reference>
<evidence type="ECO:0000250" key="1">
    <source>
        <dbReference type="UniProtKB" id="P0A2I7"/>
    </source>
</evidence>
<evidence type="ECO:0000250" key="2">
    <source>
        <dbReference type="UniProtKB" id="P0AEU3"/>
    </source>
</evidence>
<evidence type="ECO:0000255" key="3"/>
<evidence type="ECO:0000255" key="4">
    <source>
        <dbReference type="PROSITE-ProRule" id="PRU00441"/>
    </source>
</evidence>
<evidence type="ECO:0000305" key="5"/>
<proteinExistence type="inferred from homology"/>
<sequence>MIEILHEYWKPLLWTDGYRFTGVAITLWLLILSVVIGGVLALFLAIGRVSSNKYIQFPIWLFTYIFRGTPLYVQLLVFYSGMYTLEIVKGTEFLNAFFRSGLNCTVLALTLNTCAYTTEIFAGAIRSVPHGEIEAARAYGFSTFKMYRCIILPSALRIALPAYSNEVILMLHSTALAFTATVPDLLKIARDINAATYQPFTAFGIAAVLYLIISYVLISLFRRAEKRWLQHVKPSSTH</sequence>
<feature type="chain" id="PRO_0000060045" description="Histidine/lysine/arginine/ornithine transport system permease protein HisM">
    <location>
        <begin position="1"/>
        <end position="238"/>
    </location>
</feature>
<feature type="topological domain" description="Periplasmic" evidence="5">
    <location>
        <begin position="1"/>
        <end position="26"/>
    </location>
</feature>
<feature type="transmembrane region" description="Helical" evidence="3">
    <location>
        <begin position="27"/>
        <end position="47"/>
    </location>
</feature>
<feature type="topological domain" description="Cytoplasmic" evidence="5">
    <location>
        <begin position="48"/>
        <end position="58"/>
    </location>
</feature>
<feature type="transmembrane region" description="Helical" evidence="3">
    <location>
        <begin position="59"/>
        <end position="79"/>
    </location>
</feature>
<feature type="topological domain" description="Periplasmic" evidence="5">
    <location>
        <begin position="80"/>
        <end position="104"/>
    </location>
</feature>
<feature type="transmembrane region" description="Helical" evidence="3">
    <location>
        <begin position="105"/>
        <end position="125"/>
    </location>
</feature>
<feature type="topological domain" description="Cytoplasmic" evidence="5">
    <location>
        <begin position="126"/>
        <end position="157"/>
    </location>
</feature>
<feature type="transmembrane region" description="Helical" evidence="3">
    <location>
        <begin position="158"/>
        <end position="178"/>
    </location>
</feature>
<feature type="topological domain" description="Periplasmic" evidence="5">
    <location>
        <begin position="179"/>
        <end position="199"/>
    </location>
</feature>
<feature type="transmembrane region" description="Helical" evidence="3">
    <location>
        <begin position="200"/>
        <end position="220"/>
    </location>
</feature>
<feature type="topological domain" description="Cytoplasmic" evidence="2">
    <location>
        <begin position="221"/>
        <end position="238"/>
    </location>
</feature>
<feature type="domain" description="ABC transmembrane type-1" evidence="4">
    <location>
        <begin position="23"/>
        <end position="221"/>
    </location>
</feature>
<accession>P0AEU5</accession>
<accession>P20091</accession>
<accession>P76936</accession>
<dbReference type="EMBL" id="AE005174">
    <property type="protein sequence ID" value="AAG57436.1"/>
    <property type="molecule type" value="Genomic_DNA"/>
</dbReference>
<dbReference type="EMBL" id="BA000007">
    <property type="protein sequence ID" value="BAB36614.1"/>
    <property type="molecule type" value="Genomic_DNA"/>
</dbReference>
<dbReference type="PIR" id="G91027">
    <property type="entry name" value="G91027"/>
</dbReference>
<dbReference type="RefSeq" id="NP_311218.1">
    <property type="nucleotide sequence ID" value="NC_002695.1"/>
</dbReference>
<dbReference type="RefSeq" id="WP_000569958.1">
    <property type="nucleotide sequence ID" value="NZ_VOAI01000001.1"/>
</dbReference>
<dbReference type="SMR" id="P0AEU5"/>
<dbReference type="STRING" id="155864.Z3569"/>
<dbReference type="GeneID" id="916899"/>
<dbReference type="KEGG" id="ece:Z3569"/>
<dbReference type="KEGG" id="ecs:ECs_3191"/>
<dbReference type="PATRIC" id="fig|386585.9.peg.3331"/>
<dbReference type="eggNOG" id="COG4160">
    <property type="taxonomic scope" value="Bacteria"/>
</dbReference>
<dbReference type="HOGENOM" id="CLU_019602_1_4_6"/>
<dbReference type="OMA" id="QLVPMWA"/>
<dbReference type="Proteomes" id="UP000000558">
    <property type="component" value="Chromosome"/>
</dbReference>
<dbReference type="Proteomes" id="UP000002519">
    <property type="component" value="Chromosome"/>
</dbReference>
<dbReference type="GO" id="GO:0043190">
    <property type="term" value="C:ATP-binding cassette (ABC) transporter complex"/>
    <property type="evidence" value="ECO:0007669"/>
    <property type="project" value="InterPro"/>
</dbReference>
<dbReference type="GO" id="GO:0022857">
    <property type="term" value="F:transmembrane transporter activity"/>
    <property type="evidence" value="ECO:0007669"/>
    <property type="project" value="InterPro"/>
</dbReference>
<dbReference type="GO" id="GO:0006865">
    <property type="term" value="P:amino acid transport"/>
    <property type="evidence" value="ECO:0007669"/>
    <property type="project" value="UniProtKB-KW"/>
</dbReference>
<dbReference type="CDD" id="cd06261">
    <property type="entry name" value="TM_PBP2"/>
    <property type="match status" value="1"/>
</dbReference>
<dbReference type="FunFam" id="1.10.3720.10:FF:000012">
    <property type="entry name" value="Histidine ABC transporter permease HisM"/>
    <property type="match status" value="1"/>
</dbReference>
<dbReference type="Gene3D" id="1.10.3720.10">
    <property type="entry name" value="MetI-like"/>
    <property type="match status" value="1"/>
</dbReference>
<dbReference type="InterPro" id="IPR051322">
    <property type="entry name" value="AA_ABC_Transporter_Permease"/>
</dbReference>
<dbReference type="InterPro" id="IPR010065">
    <property type="entry name" value="AA_ABC_transptr_permease_3TM"/>
</dbReference>
<dbReference type="InterPro" id="IPR000515">
    <property type="entry name" value="MetI-like"/>
</dbReference>
<dbReference type="InterPro" id="IPR035906">
    <property type="entry name" value="MetI-like_sf"/>
</dbReference>
<dbReference type="NCBIfam" id="TIGR01726">
    <property type="entry name" value="HEQRo_perm_3TM"/>
    <property type="match status" value="1"/>
</dbReference>
<dbReference type="NCBIfam" id="NF011651">
    <property type="entry name" value="PRK15069.1"/>
    <property type="match status" value="1"/>
</dbReference>
<dbReference type="PANTHER" id="PTHR30450">
    <property type="entry name" value="ABC TRANSPORTER PERMEASE"/>
    <property type="match status" value="1"/>
</dbReference>
<dbReference type="PANTHER" id="PTHR30450:SF5">
    <property type="entry name" value="HISTIDINE TRANSPORT SYSTEM PERMEASE PROTEIN HISM"/>
    <property type="match status" value="1"/>
</dbReference>
<dbReference type="Pfam" id="PF00528">
    <property type="entry name" value="BPD_transp_1"/>
    <property type="match status" value="1"/>
</dbReference>
<dbReference type="SUPFAM" id="SSF161098">
    <property type="entry name" value="MetI-like"/>
    <property type="match status" value="1"/>
</dbReference>
<dbReference type="PROSITE" id="PS50928">
    <property type="entry name" value="ABC_TM1"/>
    <property type="match status" value="1"/>
</dbReference>
<organism>
    <name type="scientific">Escherichia coli O157:H7</name>
    <dbReference type="NCBI Taxonomy" id="83334"/>
    <lineage>
        <taxon>Bacteria</taxon>
        <taxon>Pseudomonadati</taxon>
        <taxon>Pseudomonadota</taxon>
        <taxon>Gammaproteobacteria</taxon>
        <taxon>Enterobacterales</taxon>
        <taxon>Enterobacteriaceae</taxon>
        <taxon>Escherichia</taxon>
    </lineage>
</organism>
<name>HISM_ECO57</name>
<keyword id="KW-0029">Amino-acid transport</keyword>
<keyword id="KW-0997">Cell inner membrane</keyword>
<keyword id="KW-1003">Cell membrane</keyword>
<keyword id="KW-0472">Membrane</keyword>
<keyword id="KW-1185">Reference proteome</keyword>
<keyword id="KW-0812">Transmembrane</keyword>
<keyword id="KW-1133">Transmembrane helix</keyword>
<keyword id="KW-0813">Transport</keyword>